<proteinExistence type="evidence at protein level"/>
<dbReference type="EMBL" id="CP000542">
    <property type="protein sequence ID" value="ABM59661.1"/>
    <property type="molecule type" value="Genomic_DNA"/>
</dbReference>
<dbReference type="RefSeq" id="WP_011811648.1">
    <property type="nucleotide sequence ID" value="NC_008786.1"/>
</dbReference>
<dbReference type="PDB" id="4P9K">
    <property type="method" value="X-ray"/>
    <property type="resolution" value="1.40 A"/>
    <property type="chains" value="A=33-335"/>
</dbReference>
<dbReference type="PDB" id="4PAK">
    <property type="method" value="X-ray"/>
    <property type="resolution" value="1.20 A"/>
    <property type="chains" value="A=33-335"/>
</dbReference>
<dbReference type="PDBsum" id="4P9K"/>
<dbReference type="PDBsum" id="4PAK"/>
<dbReference type="SMR" id="A1WPV4"/>
<dbReference type="STRING" id="391735.Veis_3954"/>
<dbReference type="GeneID" id="76462306"/>
<dbReference type="KEGG" id="vei:Veis_3954"/>
<dbReference type="eggNOG" id="COG1638">
    <property type="taxonomic scope" value="Bacteria"/>
</dbReference>
<dbReference type="HOGENOM" id="CLU_036176_1_3_4"/>
<dbReference type="OrthoDB" id="9794826at2"/>
<dbReference type="EvolutionaryTrace" id="A1WPV4"/>
<dbReference type="Proteomes" id="UP000000374">
    <property type="component" value="Chromosome"/>
</dbReference>
<dbReference type="GO" id="GO:0030288">
    <property type="term" value="C:outer membrane-bounded periplasmic space"/>
    <property type="evidence" value="ECO:0007669"/>
    <property type="project" value="InterPro"/>
</dbReference>
<dbReference type="GO" id="GO:0030246">
    <property type="term" value="F:carbohydrate binding"/>
    <property type="evidence" value="ECO:0007669"/>
    <property type="project" value="TreeGrafter"/>
</dbReference>
<dbReference type="GO" id="GO:0055085">
    <property type="term" value="P:transmembrane transport"/>
    <property type="evidence" value="ECO:0007669"/>
    <property type="project" value="InterPro"/>
</dbReference>
<dbReference type="CDD" id="cd13675">
    <property type="entry name" value="PBP2_TRAP_SBP_like_5"/>
    <property type="match status" value="1"/>
</dbReference>
<dbReference type="Gene3D" id="3.40.190.170">
    <property type="entry name" value="Bacterial extracellular solute-binding protein, family 7"/>
    <property type="match status" value="1"/>
</dbReference>
<dbReference type="InterPro" id="IPR018389">
    <property type="entry name" value="DctP_fam"/>
</dbReference>
<dbReference type="InterPro" id="IPR004682">
    <property type="entry name" value="TRAP_DctP"/>
</dbReference>
<dbReference type="InterPro" id="IPR038404">
    <property type="entry name" value="TRAP_DctP_sf"/>
</dbReference>
<dbReference type="NCBIfam" id="TIGR00787">
    <property type="entry name" value="dctP"/>
    <property type="match status" value="1"/>
</dbReference>
<dbReference type="NCBIfam" id="NF037995">
    <property type="entry name" value="TRAP_S1"/>
    <property type="match status" value="1"/>
</dbReference>
<dbReference type="PANTHER" id="PTHR33376">
    <property type="match status" value="1"/>
</dbReference>
<dbReference type="PANTHER" id="PTHR33376:SF18">
    <property type="entry name" value="2,3-DIKETO-L-GULONATE-BINDING PERIPLASMIC PROTEIN YIAO"/>
    <property type="match status" value="1"/>
</dbReference>
<dbReference type="Pfam" id="PF03480">
    <property type="entry name" value="DctP"/>
    <property type="match status" value="1"/>
</dbReference>
<dbReference type="PIRSF" id="PIRSF006470">
    <property type="entry name" value="DctB"/>
    <property type="match status" value="1"/>
</dbReference>
<accession>A1WPV4</accession>
<name>DCTP_VEREI</name>
<evidence type="ECO:0000250" key="1">
    <source>
        <dbReference type="UniProtKB" id="P37735"/>
    </source>
</evidence>
<evidence type="ECO:0000255" key="2"/>
<evidence type="ECO:0000269" key="3">
    <source>
    </source>
</evidence>
<evidence type="ECO:0000305" key="4"/>
<evidence type="ECO:0000312" key="5">
    <source>
        <dbReference type="EMBL" id="ABM59661.1"/>
    </source>
</evidence>
<evidence type="ECO:0007744" key="6">
    <source>
        <dbReference type="PDB" id="4P9K"/>
    </source>
</evidence>
<evidence type="ECO:0007744" key="7">
    <source>
        <dbReference type="PDB" id="4PAK"/>
    </source>
</evidence>
<evidence type="ECO:0007829" key="8">
    <source>
        <dbReference type="PDB" id="4PAK"/>
    </source>
</evidence>
<keyword id="KW-0002">3D-structure</keyword>
<keyword id="KW-0574">Periplasm</keyword>
<keyword id="KW-1185">Reference proteome</keyword>
<keyword id="KW-0732">Signal</keyword>
<keyword id="KW-0813">Transport</keyword>
<reference key="1">
    <citation type="submission" date="2006-12" db="EMBL/GenBank/DDBJ databases">
        <title>Complete sequence of chromosome 1 of Verminephrobacter eiseniae EF01-2.</title>
        <authorList>
            <person name="Copeland A."/>
            <person name="Lucas S."/>
            <person name="Lapidus A."/>
            <person name="Barry K."/>
            <person name="Detter J.C."/>
            <person name="Glavina del Rio T."/>
            <person name="Dalin E."/>
            <person name="Tice H."/>
            <person name="Pitluck S."/>
            <person name="Chertkov O."/>
            <person name="Brettin T."/>
            <person name="Bruce D."/>
            <person name="Han C."/>
            <person name="Tapia R."/>
            <person name="Gilna P."/>
            <person name="Schmutz J."/>
            <person name="Larimer F."/>
            <person name="Land M."/>
            <person name="Hauser L."/>
            <person name="Kyrpides N."/>
            <person name="Kim E."/>
            <person name="Stahl D."/>
            <person name="Richardson P."/>
        </authorList>
    </citation>
    <scope>NUCLEOTIDE SEQUENCE [LARGE SCALE GENOMIC DNA]</scope>
    <source>
        <strain>EF01-2</strain>
    </source>
</reference>
<reference evidence="6 7" key="2">
    <citation type="journal article" date="2015" name="Biochemistry">
        <title>Experimental strategies for functional annotation and metabolism discovery: targeted screening of solute binding proteins and unbiased panning of metabolomes.</title>
        <authorList>
            <person name="Vetting M.W."/>
            <person name="Al-Obaidi N."/>
            <person name="Zhao S."/>
            <person name="San Francisco B."/>
            <person name="Kim J."/>
            <person name="Wichelecki D.J."/>
            <person name="Bouvier J.T."/>
            <person name="Solbiati J.O."/>
            <person name="Vu H."/>
            <person name="Zhang X."/>
            <person name="Rodionov D.A."/>
            <person name="Love J.D."/>
            <person name="Hillerich B.S."/>
            <person name="Seidel R.D."/>
            <person name="Quinn R.J."/>
            <person name="Osterman A.L."/>
            <person name="Cronan J.E."/>
            <person name="Jacobson M.P."/>
            <person name="Gerlt J.A."/>
            <person name="Almo S.C."/>
        </authorList>
    </citation>
    <scope>X-RAY CRYSTALLOGRAPHY (1.20 ANGSTROMS) OF 33-335 IN COMPLEX WITH ERYTHRONATE AND PANTOATE</scope>
    <scope>FUNCTION</scope>
</reference>
<protein>
    <recommendedName>
        <fullName evidence="4">Solute-binding protein Veis_3954</fullName>
    </recommendedName>
</protein>
<gene>
    <name evidence="5" type="ordered locus">Veis_3954</name>
</gene>
<organism evidence="5">
    <name type="scientific">Verminephrobacter eiseniae (strain EF01-2)</name>
    <dbReference type="NCBI Taxonomy" id="391735"/>
    <lineage>
        <taxon>Bacteria</taxon>
        <taxon>Pseudomonadati</taxon>
        <taxon>Pseudomonadota</taxon>
        <taxon>Betaproteobacteria</taxon>
        <taxon>Burkholderiales</taxon>
        <taxon>Comamonadaceae</taxon>
        <taxon>Verminephrobacter</taxon>
    </lineage>
</organism>
<sequence length="335" mass="36407">MPSTRPLPRPSSRSLRRLALGLGLAFGLGATAAAQTTMRINISTAQNSHQGVAIDTFAKEVEKRTGGRYKVQTFYNAALGAERESVEAVQLGTHELTFSSSGPIPNFVPETKILDVPFLFRDKAHARAVLDGPIGQELLTRFDGKGFKALAWAENGFRHMSNSKRAVKEPGDLKGLKMRTMENPVHIAAYKGFGIVTTPMAFSEVFTALQQGTVDGQENPLSVIISAKFDQVQKHLTLTGHVYSPALFLMNKALFDKLPAADQQAFIDAARQGAKLNRARVDEDDAKGVADLRAKGMTVIDNIDKARFVAALAPVNAQFEKQFGKAALEQIRSAQ</sequence>
<feature type="signal peptide" evidence="2">
    <location>
        <begin position="1"/>
        <end position="34"/>
    </location>
</feature>
<feature type="chain" id="PRO_5002640020" description="Solute-binding protein Veis_3954">
    <location>
        <begin position="35"/>
        <end position="335"/>
    </location>
</feature>
<feature type="binding site" evidence="7">
    <location>
        <position position="50"/>
    </location>
    <ligand>
        <name>(R)-pantoate</name>
        <dbReference type="ChEBI" id="CHEBI:15980"/>
    </ligand>
</feature>
<feature type="binding site" evidence="7">
    <location>
        <position position="82"/>
    </location>
    <ligand>
        <name>(R)-pantoate</name>
        <dbReference type="ChEBI" id="CHEBI:15980"/>
    </ligand>
</feature>
<feature type="binding site" evidence="7">
    <location>
        <begin position="155"/>
        <end position="158"/>
    </location>
    <ligand>
        <name>(R)-pantoate</name>
        <dbReference type="ChEBI" id="CHEBI:15980"/>
    </ligand>
</feature>
<feature type="binding site" evidence="7">
    <location>
        <position position="179"/>
    </location>
    <ligand>
        <name>(R)-pantoate</name>
        <dbReference type="ChEBI" id="CHEBI:15980"/>
    </ligand>
</feature>
<feature type="binding site" evidence="7">
    <location>
        <position position="219"/>
    </location>
    <ligand>
        <name>(R)-pantoate</name>
        <dbReference type="ChEBI" id="CHEBI:15980"/>
    </ligand>
</feature>
<feature type="strand" evidence="8">
    <location>
        <begin position="36"/>
        <end position="41"/>
    </location>
</feature>
<feature type="strand" evidence="8">
    <location>
        <begin position="46"/>
        <end position="48"/>
    </location>
</feature>
<feature type="helix" evidence="8">
    <location>
        <begin position="49"/>
        <end position="64"/>
    </location>
</feature>
<feature type="turn" evidence="8">
    <location>
        <begin position="65"/>
        <end position="67"/>
    </location>
</feature>
<feature type="strand" evidence="8">
    <location>
        <begin position="68"/>
        <end position="74"/>
    </location>
</feature>
<feature type="turn" evidence="8">
    <location>
        <begin position="76"/>
        <end position="79"/>
    </location>
</feature>
<feature type="helix" evidence="8">
    <location>
        <begin position="82"/>
        <end position="91"/>
    </location>
</feature>
<feature type="strand" evidence="8">
    <location>
        <begin position="93"/>
        <end position="101"/>
    </location>
</feature>
<feature type="helix" evidence="8">
    <location>
        <begin position="104"/>
        <end position="106"/>
    </location>
</feature>
<feature type="helix" evidence="8">
    <location>
        <begin position="109"/>
        <end position="115"/>
    </location>
</feature>
<feature type="helix" evidence="8">
    <location>
        <begin position="123"/>
        <end position="131"/>
    </location>
</feature>
<feature type="helix" evidence="8">
    <location>
        <begin position="133"/>
        <end position="140"/>
    </location>
</feature>
<feature type="helix" evidence="8">
    <location>
        <begin position="141"/>
        <end position="145"/>
    </location>
</feature>
<feature type="strand" evidence="8">
    <location>
        <begin position="147"/>
        <end position="164"/>
    </location>
</feature>
<feature type="helix" evidence="8">
    <location>
        <begin position="170"/>
        <end position="173"/>
    </location>
</feature>
<feature type="strand" evidence="8">
    <location>
        <begin position="177"/>
        <end position="180"/>
    </location>
</feature>
<feature type="helix" evidence="8">
    <location>
        <begin position="184"/>
        <end position="192"/>
    </location>
</feature>
<feature type="strand" evidence="8">
    <location>
        <begin position="196"/>
        <end position="199"/>
    </location>
</feature>
<feature type="helix" evidence="8">
    <location>
        <begin position="202"/>
        <end position="204"/>
    </location>
</feature>
<feature type="helix" evidence="8">
    <location>
        <begin position="205"/>
        <end position="211"/>
    </location>
</feature>
<feature type="strand" evidence="8">
    <location>
        <begin position="213"/>
        <end position="219"/>
    </location>
</feature>
<feature type="helix" evidence="8">
    <location>
        <begin position="221"/>
        <end position="226"/>
    </location>
</feature>
<feature type="helix" evidence="8">
    <location>
        <begin position="229"/>
        <end position="231"/>
    </location>
</feature>
<feature type="strand" evidence="8">
    <location>
        <begin position="234"/>
        <end position="251"/>
    </location>
</feature>
<feature type="helix" evidence="8">
    <location>
        <begin position="252"/>
        <end position="257"/>
    </location>
</feature>
<feature type="helix" evidence="8">
    <location>
        <begin position="260"/>
        <end position="294"/>
    </location>
</feature>
<feature type="strand" evidence="8">
    <location>
        <begin position="298"/>
        <end position="300"/>
    </location>
</feature>
<feature type="helix" evidence="8">
    <location>
        <begin position="305"/>
        <end position="311"/>
    </location>
</feature>
<feature type="helix" evidence="8">
    <location>
        <begin position="313"/>
        <end position="323"/>
    </location>
</feature>
<feature type="helix" evidence="8">
    <location>
        <begin position="325"/>
        <end position="332"/>
    </location>
</feature>
<comment type="function">
    <text evidence="3 4">Solute-binding protein that binds (R)-pantoate and D-erythronate (in vitro) (PubMed:25540822). Probably part of a tripartite ATP-independent periplasmic (TRAP) transport system that mediates solute transport into the cytoplasm.</text>
</comment>
<comment type="subunit">
    <text evidence="1">The complex is comprised of an extracytoplasmic solute-binding protein and a heteromeric permease formed by two transmembrane proteins.</text>
</comment>
<comment type="subcellular location">
    <subcellularLocation>
        <location evidence="1">Periplasm</location>
    </subcellularLocation>
</comment>
<comment type="similarity">
    <text evidence="4">Belongs to the bacterial solute-binding protein 7 family.</text>
</comment>